<sequence length="118" mass="12686">MAWALLLLTLLTQGTGSWAQSALTQPPFVSGAPGQSVTISCTGTSSDVGDYDHVFWYQKRLSTTSRLLIYNVNTRPSGISDLFSGSKSGNMASLTISGLKSEVEANYHCSLYSSSYTF</sequence>
<proteinExistence type="evidence at protein level"/>
<keyword id="KW-1064">Adaptive immunity</keyword>
<keyword id="KW-1003">Cell membrane</keyword>
<keyword id="KW-1015">Disulfide bond</keyword>
<keyword id="KW-0391">Immunity</keyword>
<keyword id="KW-1280">Immunoglobulin</keyword>
<keyword id="KW-0393">Immunoglobulin domain</keyword>
<keyword id="KW-0472">Membrane</keyword>
<keyword id="KW-1185">Reference proteome</keyword>
<keyword id="KW-0964">Secreted</keyword>
<keyword id="KW-0732">Signal</keyword>
<comment type="function">
    <text evidence="5 6 7 8 9">Probable non-functional open reading frame (ORF) of V region of the variable domain of immunoglobulin light chains (PubMed:24600447). Non-functional ORF generally cannot participate in the synthesis of a productive immunoglobulin chain due to altered V-(D)-J or switch recombination and/or splicing site (at mRNA level) and/or conserved amino acid change (protein level) (PubMed:9619395). Immunoglobulins, also known as antibodies, are membrane-bound or secreted glycoproteins produced by B lymphocytes. In the recognition phase of humoral immunity, the membrane-bound immunoglobulins serve as receptors which, upon binding of a specific antigen, trigger the clonal expansion and differentiation of B lymphocytes into immunoglobulins-secreting plasma cells. Secreted immunoglobulins mediate the effector phase of humoral immunity, which results in the elimination of bound antigens (PubMed:20176268, PubMed:22158414). The antigen binding site is formed by the variable domain of one heavy chain, together with that of its associated light chain. Thus, each immunoglobulin has two antigen binding sites with remarkable affinity for a particular antigen. The variable domains are assembled by a process called V-(D)-J rearrangement and can then be subjected to somatic hypermutations which, after exposure to antigen and selection, allow affinity maturation for a particular antigen (PubMed:17576170, PubMed:20176268).</text>
</comment>
<comment type="subunit">
    <text evidence="6">Immunoglobulins are composed of two identical heavy chains and two identical light chains; disulfide-linked.</text>
</comment>
<comment type="subcellular location">
    <subcellularLocation>
        <location evidence="6 7">Secreted</location>
    </subcellularLocation>
    <subcellularLocation>
        <location evidence="6 7">Cell membrane</location>
    </subcellularLocation>
</comment>
<comment type="polymorphism">
    <text evidence="11">There are several alleles. The sequence shown is that of IMGT allele IGLV2-33*01.</text>
</comment>
<comment type="caution">
    <text evidence="9 11">Most probably a non-functional protein that cannot participate in the synthesis of a productive immunoglobulin chain due to an unusual recombination signal (RS) sequence altering V-(D)-J recombination (PubMed:9619395).</text>
</comment>
<accession>A0A075B6J2</accession>
<organism>
    <name type="scientific">Homo sapiens</name>
    <name type="common">Human</name>
    <dbReference type="NCBI Taxonomy" id="9606"/>
    <lineage>
        <taxon>Eukaryota</taxon>
        <taxon>Metazoa</taxon>
        <taxon>Chordata</taxon>
        <taxon>Craniata</taxon>
        <taxon>Vertebrata</taxon>
        <taxon>Euteleostomi</taxon>
        <taxon>Mammalia</taxon>
        <taxon>Eutheria</taxon>
        <taxon>Euarchontoglires</taxon>
        <taxon>Primates</taxon>
        <taxon>Haplorrhini</taxon>
        <taxon>Catarrhini</taxon>
        <taxon>Hominidae</taxon>
        <taxon>Homo</taxon>
    </lineage>
</organism>
<name>LV233_HUMAN</name>
<evidence type="ECO:0000250" key="1">
    <source>
        <dbReference type="UniProtKB" id="P01721"/>
    </source>
</evidence>
<evidence type="ECO:0000255" key="2"/>
<evidence type="ECO:0000255" key="3">
    <source>
        <dbReference type="PROSITE-ProRule" id="PRU00114"/>
    </source>
</evidence>
<evidence type="ECO:0000303" key="4">
    <source>
    </source>
</evidence>
<evidence type="ECO:0000303" key="5">
    <source>
    </source>
</evidence>
<evidence type="ECO:0000303" key="6">
    <source>
    </source>
</evidence>
<evidence type="ECO:0000303" key="7">
    <source>
    </source>
</evidence>
<evidence type="ECO:0000303" key="8">
    <source>
    </source>
</evidence>
<evidence type="ECO:0000303" key="9">
    <source>
    </source>
</evidence>
<evidence type="ECO:0000303" key="10">
    <source ref="4"/>
</evidence>
<evidence type="ECO:0000305" key="11"/>
<evidence type="ECO:0000312" key="12">
    <source>
        <dbReference type="HGNC" id="HGNC:5892"/>
    </source>
</evidence>
<feature type="signal peptide" evidence="2">
    <location>
        <begin position="1"/>
        <end position="19"/>
    </location>
</feature>
<feature type="chain" id="PRO_5014011174" description="Probable non-functional immunoglobulin lambda variable 2-33" evidence="2">
    <location>
        <begin position="20"/>
        <end position="118"/>
    </location>
</feature>
<feature type="domain" description="Ig-like" evidence="3">
    <location>
        <begin position="34"/>
        <end position="118" status="greater than"/>
    </location>
</feature>
<feature type="region of interest" description="Framework-1" evidence="1">
    <location>
        <begin position="20"/>
        <end position="44"/>
    </location>
</feature>
<feature type="region of interest" description="Complementarity-determining-1" evidence="1">
    <location>
        <begin position="45"/>
        <end position="53"/>
    </location>
</feature>
<feature type="region of interest" description="Framework-2" evidence="1">
    <location>
        <begin position="54"/>
        <end position="70"/>
    </location>
</feature>
<feature type="region of interest" description="Complementarity-determining-2" evidence="1">
    <location>
        <begin position="71"/>
        <end position="73"/>
    </location>
</feature>
<feature type="region of interest" description="Framework-3" evidence="1">
    <location>
        <begin position="74"/>
        <end position="109"/>
    </location>
</feature>
<feature type="region of interest" description="Complementarity-determining-3" evidence="1">
    <location>
        <begin position="110"/>
        <end position="118" status="greater than"/>
    </location>
</feature>
<feature type="disulfide bond" evidence="3">
    <location>
        <begin position="41"/>
        <end position="109"/>
    </location>
</feature>
<feature type="non-terminal residue">
    <location>
        <position position="118"/>
    </location>
</feature>
<protein>
    <recommendedName>
        <fullName evidence="11">Probable non-functional immunoglobulin lambda variable 2-33</fullName>
    </recommendedName>
</protein>
<reference key="1">
    <citation type="journal article" date="1999" name="Nature">
        <title>The DNA sequence of human chromosome 22.</title>
        <authorList>
            <person name="Dunham I."/>
            <person name="Hunt A.R."/>
            <person name="Collins J.E."/>
            <person name="Bruskiewich R."/>
            <person name="Beare D.M."/>
            <person name="Clamp M."/>
            <person name="Smink L.J."/>
            <person name="Ainscough R."/>
            <person name="Almeida J.P."/>
            <person name="Babbage A.K."/>
            <person name="Bagguley C."/>
            <person name="Bailey J."/>
            <person name="Barlow K.F."/>
            <person name="Bates K.N."/>
            <person name="Beasley O.P."/>
            <person name="Bird C.P."/>
            <person name="Blakey S.E."/>
            <person name="Bridgeman A.M."/>
            <person name="Buck D."/>
            <person name="Burgess J."/>
            <person name="Burrill W.D."/>
            <person name="Burton J."/>
            <person name="Carder C."/>
            <person name="Carter N.P."/>
            <person name="Chen Y."/>
            <person name="Clark G."/>
            <person name="Clegg S.M."/>
            <person name="Cobley V.E."/>
            <person name="Cole C.G."/>
            <person name="Collier R.E."/>
            <person name="Connor R."/>
            <person name="Conroy D."/>
            <person name="Corby N.R."/>
            <person name="Coville G.J."/>
            <person name="Cox A.V."/>
            <person name="Davis J."/>
            <person name="Dawson E."/>
            <person name="Dhami P.D."/>
            <person name="Dockree C."/>
            <person name="Dodsworth S.J."/>
            <person name="Durbin R.M."/>
            <person name="Ellington A.G."/>
            <person name="Evans K.L."/>
            <person name="Fey J.M."/>
            <person name="Fleming K."/>
            <person name="French L."/>
            <person name="Garner A.A."/>
            <person name="Gilbert J.G.R."/>
            <person name="Goward M.E."/>
            <person name="Grafham D.V."/>
            <person name="Griffiths M.N.D."/>
            <person name="Hall C."/>
            <person name="Hall R.E."/>
            <person name="Hall-Tamlyn G."/>
            <person name="Heathcott R.W."/>
            <person name="Ho S."/>
            <person name="Holmes S."/>
            <person name="Hunt S.E."/>
            <person name="Jones M.C."/>
            <person name="Kershaw J."/>
            <person name="Kimberley A.M."/>
            <person name="King A."/>
            <person name="Laird G.K."/>
            <person name="Langford C.F."/>
            <person name="Leversha M.A."/>
            <person name="Lloyd C."/>
            <person name="Lloyd D.M."/>
            <person name="Martyn I.D."/>
            <person name="Mashreghi-Mohammadi M."/>
            <person name="Matthews L.H."/>
            <person name="Mccann O.T."/>
            <person name="Mcclay J."/>
            <person name="Mclaren S."/>
            <person name="McMurray A.A."/>
            <person name="Milne S.A."/>
            <person name="Mortimore B.J."/>
            <person name="Odell C.N."/>
            <person name="Pavitt R."/>
            <person name="Pearce A.V."/>
            <person name="Pearson D."/>
            <person name="Phillimore B.J.C.T."/>
            <person name="Phillips S.H."/>
            <person name="Plumb R.W."/>
            <person name="Ramsay H."/>
            <person name="Ramsey Y."/>
            <person name="Rogers L."/>
            <person name="Ross M.T."/>
            <person name="Scott C.E."/>
            <person name="Sehra H.K."/>
            <person name="Skuce C.D."/>
            <person name="Smalley S."/>
            <person name="Smith M.L."/>
            <person name="Soderlund C."/>
            <person name="Spragon L."/>
            <person name="Steward C.A."/>
            <person name="Sulston J.E."/>
            <person name="Swann R.M."/>
            <person name="Vaudin M."/>
            <person name="Wall M."/>
            <person name="Wallis J.M."/>
            <person name="Whiteley M.N."/>
            <person name="Willey D.L."/>
            <person name="Williams L."/>
            <person name="Williams S.A."/>
            <person name="Williamson H."/>
            <person name="Wilmer T.E."/>
            <person name="Wilming L."/>
            <person name="Wright C.L."/>
            <person name="Hubbard T."/>
            <person name="Bentley D.R."/>
            <person name="Beck S."/>
            <person name="Rogers J."/>
            <person name="Shimizu N."/>
            <person name="Minoshima S."/>
            <person name="Kawasaki K."/>
            <person name="Sasaki T."/>
            <person name="Asakawa S."/>
            <person name="Kudoh J."/>
            <person name="Shintani A."/>
            <person name="Shibuya K."/>
            <person name="Yoshizaki Y."/>
            <person name="Aoki N."/>
            <person name="Mitsuyama S."/>
            <person name="Roe B.A."/>
            <person name="Chen F."/>
            <person name="Chu L."/>
            <person name="Crabtree J."/>
            <person name="Deschamps S."/>
            <person name="Do A."/>
            <person name="Do T."/>
            <person name="Dorman A."/>
            <person name="Fang F."/>
            <person name="Fu Y."/>
            <person name="Hu P."/>
            <person name="Hua A."/>
            <person name="Kenton S."/>
            <person name="Lai H."/>
            <person name="Lao H.I."/>
            <person name="Lewis J."/>
            <person name="Lewis S."/>
            <person name="Lin S.-P."/>
            <person name="Loh P."/>
            <person name="Malaj E."/>
            <person name="Nguyen T."/>
            <person name="Pan H."/>
            <person name="Phan S."/>
            <person name="Qi S."/>
            <person name="Qian Y."/>
            <person name="Ray L."/>
            <person name="Ren Q."/>
            <person name="Shaull S."/>
            <person name="Sloan D."/>
            <person name="Song L."/>
            <person name="Wang Q."/>
            <person name="Wang Y."/>
            <person name="Wang Z."/>
            <person name="White J."/>
            <person name="Willingham D."/>
            <person name="Wu H."/>
            <person name="Yao Z."/>
            <person name="Zhan M."/>
            <person name="Zhang G."/>
            <person name="Chissoe S."/>
            <person name="Murray J."/>
            <person name="Miller N."/>
            <person name="Minx P."/>
            <person name="Fulton R."/>
            <person name="Johnson D."/>
            <person name="Bemis G."/>
            <person name="Bentley D."/>
            <person name="Bradshaw H."/>
            <person name="Bourne S."/>
            <person name="Cordes M."/>
            <person name="Du Z."/>
            <person name="Fulton L."/>
            <person name="Goela D."/>
            <person name="Graves T."/>
            <person name="Hawkins J."/>
            <person name="Hinds K."/>
            <person name="Kemp K."/>
            <person name="Latreille P."/>
            <person name="Layman D."/>
            <person name="Ozersky P."/>
            <person name="Rohlfing T."/>
            <person name="Scheet P."/>
            <person name="Walker C."/>
            <person name="Wamsley A."/>
            <person name="Wohldmann P."/>
            <person name="Pepin K."/>
            <person name="Nelson J."/>
            <person name="Korf I."/>
            <person name="Bedell J.A."/>
            <person name="Hillier L.W."/>
            <person name="Mardis E."/>
            <person name="Waterston R."/>
            <person name="Wilson R."/>
            <person name="Emanuel B.S."/>
            <person name="Shaikh T."/>
            <person name="Kurahashi H."/>
            <person name="Saitta S."/>
            <person name="Budarf M.L."/>
            <person name="McDermid H.E."/>
            <person name="Johnson A."/>
            <person name="Wong A.C.C."/>
            <person name="Morrow B.E."/>
            <person name="Edelmann L."/>
            <person name="Kim U.J."/>
            <person name="Shizuya H."/>
            <person name="Simon M.I."/>
            <person name="Dumanski J.P."/>
            <person name="Peyrard M."/>
            <person name="Kedra D."/>
            <person name="Seroussi E."/>
            <person name="Fransson I."/>
            <person name="Tapia I."/>
            <person name="Bruder C.E."/>
            <person name="O'Brien K.P."/>
            <person name="Wilkinson P."/>
            <person name="Bodenteich A."/>
            <person name="Hartman K."/>
            <person name="Hu X."/>
            <person name="Khan A.S."/>
            <person name="Lane L."/>
            <person name="Tilahun Y."/>
            <person name="Wright H."/>
        </authorList>
    </citation>
    <scope>NUCLEOTIDE SEQUENCE [LARGE SCALE GENOMIC DNA] (IMGT ALLELE IGLV2-33*01)</scope>
</reference>
<reference key="2">
    <citation type="journal article" date="1998" name="Exp. Clin. Immunogenet.">
        <title>IMGT (ImMunoGeneTics) locus on focus. A new section of Experimental and Clinical Immunogenetics.</title>
        <authorList>
            <person name="Lefranc M.P."/>
        </authorList>
    </citation>
    <scope>CHARACTERIZATION</scope>
</reference>
<reference key="3">
    <citation type="journal article" date="2001" name="Exp. Clin. Immunogenet.">
        <title>Nomenclature of the human immunoglobulin heavy (IGH) genes.</title>
        <authorList>
            <person name="Lefranc M.P."/>
        </authorList>
    </citation>
    <scope>NOMENCLATURE</scope>
</reference>
<reference key="4">
    <citation type="book" date="2001" name="The Immunoglobulin FactsBook.">
        <title>The Immunoglobulin FactsBook.</title>
        <editorList>
            <person name="Lefranc M.P."/>
            <person name="Lefranc G."/>
        </editorList>
        <authorList>
            <person name="Lefranc M.P."/>
            <person name="Lefranc G."/>
        </authorList>
    </citation>
    <scope>NOMENCLATURE</scope>
</reference>
<reference key="5">
    <citation type="journal article" date="2007" name="Annu. Rev. Genet.">
        <title>Immunoglobulin somatic hypermutation.</title>
        <authorList>
            <person name="Teng G."/>
            <person name="Papavasiliou F.N."/>
        </authorList>
    </citation>
    <scope>REVIEW ON SOMATIC HYPERMUTATION</scope>
</reference>
<reference key="6">
    <citation type="journal article" date="2010" name="J. Allergy Clin. Immunol.">
        <title>Structure and function of immunoglobulins.</title>
        <authorList>
            <person name="Schroeder H.W. Jr."/>
            <person name="Cavacini L."/>
        </authorList>
    </citation>
    <scope>REVIEW ON IMMUNOGLOBULINS</scope>
</reference>
<reference key="7">
    <citation type="journal article" date="2012" name="Nat. Rev. Immunol.">
        <title>Molecular programming of B cell memory.</title>
        <authorList>
            <person name="McHeyzer-Williams M."/>
            <person name="Okitsu S."/>
            <person name="Wang N."/>
            <person name="McHeyzer-Williams L."/>
        </authorList>
    </citation>
    <scope>REVIEW ON FUNCTION</scope>
</reference>
<reference key="8">
    <citation type="journal article" date="2014" name="Front. Immunol.">
        <title>Immunoglobulin and T Cell Receptor Genes: IMGT((R)) and the Birth and Rise of Immunoinformatics.</title>
        <authorList>
            <person name="Lefranc M.P."/>
        </authorList>
    </citation>
    <scope>NOMENCLATURE</scope>
</reference>
<dbReference type="EMBL" id="AC246793">
    <property type="status" value="NOT_ANNOTATED_CDS"/>
    <property type="molecule type" value="Genomic_DNA"/>
</dbReference>
<dbReference type="SMR" id="A0A075B6J2"/>
<dbReference type="FunCoup" id="A0A075B6J2">
    <property type="interactions" value="266"/>
</dbReference>
<dbReference type="BioMuta" id="IGLV2-33"/>
<dbReference type="MassIVE" id="A0A075B6J2"/>
<dbReference type="Ensembl" id="ENST00000390302.3">
    <property type="protein sequence ID" value="ENSP00000374837.3"/>
    <property type="gene ID" value="ENSG00000211656.3"/>
</dbReference>
<dbReference type="Ensembl" id="ENST00000629472.1">
    <property type="protein sequence ID" value="ENSP00000486583.1"/>
    <property type="gene ID" value="ENSG00000281345.1"/>
</dbReference>
<dbReference type="UCSC" id="uc062ccj.1">
    <property type="organism name" value="human"/>
</dbReference>
<dbReference type="AGR" id="HGNC:5892"/>
<dbReference type="GeneCards" id="IGLV2-33"/>
<dbReference type="HGNC" id="HGNC:5892">
    <property type="gene designation" value="IGLV2-33"/>
</dbReference>
<dbReference type="HPA" id="ENSG00000211656">
    <property type="expression patterns" value="Tissue enhanced (intestine, lymphoid tissue, salivary gland)"/>
</dbReference>
<dbReference type="neXtProt" id="NX_A0A075B6J2"/>
<dbReference type="OpenTargets" id="ENSG00000211656"/>
<dbReference type="VEuPathDB" id="HostDB:ENSG00000211656"/>
<dbReference type="GeneTree" id="ENSGT00940000154179"/>
<dbReference type="HOGENOM" id="CLU_077975_4_0_1"/>
<dbReference type="InParanoid" id="A0A075B6J2"/>
<dbReference type="OMA" id="VEANYHC"/>
<dbReference type="OrthoDB" id="8908372at2759"/>
<dbReference type="PAN-GO" id="A0A075B6J2">
    <property type="GO annotations" value="3 GO annotations based on evolutionary models"/>
</dbReference>
<dbReference type="SignaLink" id="A0A075B6J2"/>
<dbReference type="PRO" id="PR:A0A075B6J2"/>
<dbReference type="Proteomes" id="UP000005640">
    <property type="component" value="Chromosome 22"/>
</dbReference>
<dbReference type="RNAct" id="A0A075B6J2">
    <property type="molecule type" value="protein"/>
</dbReference>
<dbReference type="Bgee" id="ENSG00000211656">
    <property type="expression patterns" value="Expressed in duodenum and 61 other cell types or tissues"/>
</dbReference>
<dbReference type="GO" id="GO:0005576">
    <property type="term" value="C:extracellular region"/>
    <property type="evidence" value="ECO:0007669"/>
    <property type="project" value="UniProtKB-SubCell"/>
</dbReference>
<dbReference type="GO" id="GO:0019814">
    <property type="term" value="C:immunoglobulin complex"/>
    <property type="evidence" value="ECO:0000318"/>
    <property type="project" value="GO_Central"/>
</dbReference>
<dbReference type="GO" id="GO:0005886">
    <property type="term" value="C:plasma membrane"/>
    <property type="evidence" value="ECO:0007669"/>
    <property type="project" value="UniProtKB-SubCell"/>
</dbReference>
<dbReference type="GO" id="GO:0002250">
    <property type="term" value="P:adaptive immune response"/>
    <property type="evidence" value="ECO:0007669"/>
    <property type="project" value="UniProtKB-KW"/>
</dbReference>
<dbReference type="GO" id="GO:0006955">
    <property type="term" value="P:immune response"/>
    <property type="evidence" value="ECO:0000318"/>
    <property type="project" value="GO_Central"/>
</dbReference>
<dbReference type="FunFam" id="2.60.40.10:FF:002853">
    <property type="entry name" value="IGLV2-33 isoform 1"/>
    <property type="match status" value="1"/>
</dbReference>
<dbReference type="Gene3D" id="2.60.40.10">
    <property type="entry name" value="Immunoglobulins"/>
    <property type="match status" value="1"/>
</dbReference>
<dbReference type="InterPro" id="IPR007110">
    <property type="entry name" value="Ig-like_dom"/>
</dbReference>
<dbReference type="InterPro" id="IPR036179">
    <property type="entry name" value="Ig-like_dom_sf"/>
</dbReference>
<dbReference type="InterPro" id="IPR013783">
    <property type="entry name" value="Ig-like_fold"/>
</dbReference>
<dbReference type="InterPro" id="IPR003599">
    <property type="entry name" value="Ig_sub"/>
</dbReference>
<dbReference type="InterPro" id="IPR013106">
    <property type="entry name" value="Ig_V-set"/>
</dbReference>
<dbReference type="InterPro" id="IPR050150">
    <property type="entry name" value="IgV_Light_Chain"/>
</dbReference>
<dbReference type="PANTHER" id="PTHR23267">
    <property type="entry name" value="IMMUNOGLOBULIN LIGHT CHAIN"/>
    <property type="match status" value="1"/>
</dbReference>
<dbReference type="Pfam" id="PF07686">
    <property type="entry name" value="V-set"/>
    <property type="match status" value="1"/>
</dbReference>
<dbReference type="SMART" id="SM00409">
    <property type="entry name" value="IG"/>
    <property type="match status" value="1"/>
</dbReference>
<dbReference type="SMART" id="SM00406">
    <property type="entry name" value="IGv"/>
    <property type="match status" value="1"/>
</dbReference>
<dbReference type="SUPFAM" id="SSF48726">
    <property type="entry name" value="Immunoglobulin"/>
    <property type="match status" value="1"/>
</dbReference>
<dbReference type="PROSITE" id="PS50835">
    <property type="entry name" value="IG_LIKE"/>
    <property type="match status" value="1"/>
</dbReference>
<gene>
    <name evidence="4 10 12" type="primary">IGLV2-33</name>
</gene>